<sequence length="160" mass="18000">MVPKLFTSQICLLLLLGLMGVEGSLHAKPGQFTWAQWFEIQHINMTSGQCTNAMQVINNYQRRCKNQNTFLLTTFADVVHVCGNPSMPCPSNTSLNNCHHSGVQVPLIHCNLTTPSRRISNCRYTQTTANKYYIVACNNSDPVRDPPQYPVVPVHLDRII</sequence>
<keyword id="KW-1015">Disulfide bond</keyword>
<keyword id="KW-0255">Endonuclease</keyword>
<keyword id="KW-0325">Glycoprotein</keyword>
<keyword id="KW-0378">Hydrolase</keyword>
<keyword id="KW-0456">Lyase</keyword>
<keyword id="KW-0458">Lysosome</keyword>
<keyword id="KW-0944">Nitration</keyword>
<keyword id="KW-0540">Nuclease</keyword>
<keyword id="KW-1185">Reference proteome</keyword>
<keyword id="KW-0732">Signal</keyword>
<organism>
    <name type="scientific">Macaca fascicularis</name>
    <name type="common">Crab-eating macaque</name>
    <name type="synonym">Cynomolgus monkey</name>
    <dbReference type="NCBI Taxonomy" id="9541"/>
    <lineage>
        <taxon>Eukaryota</taxon>
        <taxon>Metazoa</taxon>
        <taxon>Chordata</taxon>
        <taxon>Craniata</taxon>
        <taxon>Vertebrata</taxon>
        <taxon>Euteleostomi</taxon>
        <taxon>Mammalia</taxon>
        <taxon>Eutheria</taxon>
        <taxon>Euarchontoglires</taxon>
        <taxon>Primates</taxon>
        <taxon>Haplorrhini</taxon>
        <taxon>Catarrhini</taxon>
        <taxon>Cercopithecidae</taxon>
        <taxon>Cercopithecinae</taxon>
        <taxon>Macaca</taxon>
    </lineage>
</organism>
<name>RNAS2_MACFA</name>
<feature type="signal peptide" evidence="1">
    <location>
        <begin position="1"/>
        <end position="27"/>
    </location>
</feature>
<feature type="chain" id="PRO_0000030876" description="Non-secretory ribonuclease">
    <location>
        <begin position="28"/>
        <end position="160"/>
    </location>
</feature>
<feature type="active site" description="Proton acceptor" evidence="1">
    <location>
        <position position="42"/>
    </location>
</feature>
<feature type="active site" description="Proton donor" evidence="1">
    <location>
        <position position="155"/>
    </location>
</feature>
<feature type="binding site" evidence="1">
    <location>
        <begin position="65"/>
        <end position="69"/>
    </location>
    <ligand>
        <name>substrate</name>
    </ligand>
</feature>
<feature type="modified residue" description="3'-nitrotyrosine" evidence="2">
    <location>
        <position position="60"/>
    </location>
</feature>
<feature type="glycosylation site" description="C-linked (Man) tryptophan" evidence="2">
    <location>
        <position position="34"/>
    </location>
</feature>
<feature type="glycosylation site" description="N-linked (GlcNAc...) asparagine" evidence="3">
    <location>
        <position position="44"/>
    </location>
</feature>
<feature type="glycosylation site" description="N-linked (GlcNAc...) asparagine" evidence="3">
    <location>
        <position position="92"/>
    </location>
</feature>
<feature type="glycosylation site" description="N-linked (GlcNAc...) asparagine" evidence="3">
    <location>
        <position position="111"/>
    </location>
</feature>
<feature type="glycosylation site" description="N-linked (GlcNAc...) asparagine" evidence="3">
    <location>
        <position position="138"/>
    </location>
</feature>
<feature type="disulfide bond" evidence="1">
    <location>
        <begin position="50"/>
        <end position="110"/>
    </location>
</feature>
<feature type="disulfide bond" evidence="1">
    <location>
        <begin position="64"/>
        <end position="122"/>
    </location>
</feature>
<feature type="disulfide bond" evidence="1">
    <location>
        <begin position="82"/>
        <end position="137"/>
    </location>
</feature>
<feature type="disulfide bond" evidence="1">
    <location>
        <begin position="89"/>
        <end position="98"/>
    </location>
</feature>
<comment type="function">
    <text evidence="4">This is a non-secretory ribonuclease. It is a pyrimidine specific nuclease with a slight preference for U. Cytotoxin and helminthotoxin. Possesses a wide variety of biological activities.</text>
</comment>
<comment type="catalytic activity">
    <reaction evidence="4">
        <text>an [RNA] containing cytidine + H2O = an [RNA]-3'-cytidine-3'-phosphate + a 5'-hydroxy-ribonucleotide-3'-[RNA].</text>
        <dbReference type="EC" id="4.6.1.18"/>
    </reaction>
</comment>
<comment type="catalytic activity">
    <reaction evidence="4">
        <text>an [RNA] containing uridine + H2O = an [RNA]-3'-uridine-3'-phosphate + a 5'-hydroxy-ribonucleotide-3'-[RNA].</text>
        <dbReference type="EC" id="4.6.1.18"/>
    </reaction>
</comment>
<comment type="biophysicochemical properties">
    <kinetics>
        <KM evidence="4">1.8 uM for yeast tRNA (in the presence of 40 mM sodium phosphate at pH 7.0)</KM>
    </kinetics>
</comment>
<comment type="subunit">
    <text evidence="1">Interacts with and forms a tight 1:1 complex with RNH1. Dimerization of two such complexes may occur (By similarity).</text>
</comment>
<comment type="subcellular location">
    <subcellularLocation>
        <location evidence="5">Lysosome</location>
    </subcellularLocation>
    <subcellularLocation>
        <location>Cytoplasmic granule</location>
    </subcellularLocation>
    <text>Matrix of eosinophil's large specific granule.</text>
</comment>
<comment type="similarity">
    <text evidence="5">Belongs to the pancreatic ribonuclease family.</text>
</comment>
<accession>P47783</accession>
<reference key="1">
    <citation type="journal article" date="1995" name="Nat. Genet.">
        <title>Rapid evolution of a unique family of primate ribonuclease genes.</title>
        <authorList>
            <person name="Rosenberg H.F."/>
            <person name="Dyer K.D."/>
            <person name="Tiffany H.L."/>
            <person name="Gonzalez M."/>
        </authorList>
    </citation>
    <scope>NUCLEOTIDE SEQUENCE [GENOMIC DNA]</scope>
    <scope>FUNCTION</scope>
    <scope>CATALYTIC ACTIVITY</scope>
    <scope>BIOPHYSICOCHEMICAL PROPERTIES</scope>
</reference>
<protein>
    <recommendedName>
        <fullName>Non-secretory ribonuclease</fullName>
        <ecNumber evidence="4">4.6.1.18</ecNumber>
    </recommendedName>
    <alternativeName>
        <fullName>Eosinophil-derived neurotoxin</fullName>
    </alternativeName>
    <alternativeName>
        <fullName>RNase UpI-2</fullName>
    </alternativeName>
    <alternativeName>
        <fullName>Ribonuclease 2</fullName>
        <shortName>RNase 2</shortName>
    </alternativeName>
    <alternativeName>
        <fullName>Ribonuclease US</fullName>
    </alternativeName>
</protein>
<proteinExistence type="evidence at protein level"/>
<evidence type="ECO:0000250" key="1"/>
<evidence type="ECO:0000250" key="2">
    <source>
        <dbReference type="UniProtKB" id="P10153"/>
    </source>
</evidence>
<evidence type="ECO:0000255" key="3"/>
<evidence type="ECO:0000269" key="4">
    <source>
    </source>
</evidence>
<evidence type="ECO:0000305" key="5"/>
<dbReference type="EC" id="4.6.1.18" evidence="4"/>
<dbReference type="EMBL" id="U24096">
    <property type="protein sequence ID" value="AAC50145.1"/>
    <property type="molecule type" value="Genomic_DNA"/>
</dbReference>
<dbReference type="PIR" id="I84444">
    <property type="entry name" value="I84444"/>
</dbReference>
<dbReference type="SMR" id="P47783"/>
<dbReference type="GlyCosmos" id="P47783">
    <property type="glycosylation" value="5 sites, No reported glycans"/>
</dbReference>
<dbReference type="eggNOG" id="ENOG502TF52">
    <property type="taxonomic scope" value="Eukaryota"/>
</dbReference>
<dbReference type="Proteomes" id="UP000233100">
    <property type="component" value="Unplaced"/>
</dbReference>
<dbReference type="GO" id="GO:0005615">
    <property type="term" value="C:extracellular space"/>
    <property type="evidence" value="ECO:0007669"/>
    <property type="project" value="TreeGrafter"/>
</dbReference>
<dbReference type="GO" id="GO:0005764">
    <property type="term" value="C:lysosome"/>
    <property type="evidence" value="ECO:0007669"/>
    <property type="project" value="UniProtKB-SubCell"/>
</dbReference>
<dbReference type="GO" id="GO:0016829">
    <property type="term" value="F:lyase activity"/>
    <property type="evidence" value="ECO:0007669"/>
    <property type="project" value="UniProtKB-KW"/>
</dbReference>
<dbReference type="GO" id="GO:0003676">
    <property type="term" value="F:nucleic acid binding"/>
    <property type="evidence" value="ECO:0007669"/>
    <property type="project" value="InterPro"/>
</dbReference>
<dbReference type="GO" id="GO:0004522">
    <property type="term" value="F:ribonuclease A activity"/>
    <property type="evidence" value="ECO:0007669"/>
    <property type="project" value="UniProtKB-EC"/>
</dbReference>
<dbReference type="GO" id="GO:0004540">
    <property type="term" value="F:RNA nuclease activity"/>
    <property type="evidence" value="ECO:0000314"/>
    <property type="project" value="UniProtKB"/>
</dbReference>
<dbReference type="GO" id="GO:0006935">
    <property type="term" value="P:chemotaxis"/>
    <property type="evidence" value="ECO:0007669"/>
    <property type="project" value="TreeGrafter"/>
</dbReference>
<dbReference type="GO" id="GO:0051607">
    <property type="term" value="P:defense response to virus"/>
    <property type="evidence" value="ECO:0000314"/>
    <property type="project" value="UniProtKB"/>
</dbReference>
<dbReference type="GO" id="GO:0002227">
    <property type="term" value="P:innate immune response in mucosa"/>
    <property type="evidence" value="ECO:0007669"/>
    <property type="project" value="TreeGrafter"/>
</dbReference>
<dbReference type="CDD" id="cd06265">
    <property type="entry name" value="RNase_A_canonical"/>
    <property type="match status" value="1"/>
</dbReference>
<dbReference type="FunFam" id="3.10.130.10:FF:000001">
    <property type="entry name" value="Ribonuclease pancreatic"/>
    <property type="match status" value="1"/>
</dbReference>
<dbReference type="Gene3D" id="3.10.130.10">
    <property type="entry name" value="Ribonuclease A-like domain"/>
    <property type="match status" value="1"/>
</dbReference>
<dbReference type="InterPro" id="IPR001427">
    <property type="entry name" value="RNaseA"/>
</dbReference>
<dbReference type="InterPro" id="IPR036816">
    <property type="entry name" value="RNaseA-like_dom_sf"/>
</dbReference>
<dbReference type="InterPro" id="IPR023411">
    <property type="entry name" value="RNaseA_AS"/>
</dbReference>
<dbReference type="InterPro" id="IPR023412">
    <property type="entry name" value="RNaseA_domain"/>
</dbReference>
<dbReference type="PANTHER" id="PTHR11437:SF62">
    <property type="entry name" value="NON-SECRETORY RIBONUCLEASE"/>
    <property type="match status" value="1"/>
</dbReference>
<dbReference type="PANTHER" id="PTHR11437">
    <property type="entry name" value="RIBONUCLEASE"/>
    <property type="match status" value="1"/>
</dbReference>
<dbReference type="Pfam" id="PF00074">
    <property type="entry name" value="RnaseA"/>
    <property type="match status" value="1"/>
</dbReference>
<dbReference type="PRINTS" id="PR00794">
    <property type="entry name" value="RIBONUCLEASE"/>
</dbReference>
<dbReference type="SMART" id="SM00092">
    <property type="entry name" value="RNAse_Pc"/>
    <property type="match status" value="1"/>
</dbReference>
<dbReference type="SUPFAM" id="SSF54076">
    <property type="entry name" value="RNase A-like"/>
    <property type="match status" value="1"/>
</dbReference>
<dbReference type="PROSITE" id="PS00127">
    <property type="entry name" value="RNASE_PANCREATIC"/>
    <property type="match status" value="1"/>
</dbReference>
<gene>
    <name type="primary">RNASE2</name>
    <name type="synonym">EDN</name>
    <name type="synonym">RNS2</name>
</gene>